<evidence type="ECO:0000250" key="1"/>
<evidence type="ECO:0000255" key="2"/>
<evidence type="ECO:0000255" key="3">
    <source>
        <dbReference type="PROSITE-ProRule" id="PRU00338"/>
    </source>
</evidence>
<evidence type="ECO:0000256" key="4">
    <source>
        <dbReference type="SAM" id="MobiDB-lite"/>
    </source>
</evidence>
<evidence type="ECO:0000269" key="5">
    <source>
    </source>
</evidence>
<evidence type="ECO:0000269" key="6">
    <source>
    </source>
</evidence>
<evidence type="ECO:0000303" key="7">
    <source ref="5"/>
</evidence>
<evidence type="ECO:0007744" key="8">
    <source>
    </source>
</evidence>
<name>MBD10_ARATH</name>
<feature type="chain" id="PRO_0000405286" description="Methyl-CpG-binding domain-containing protein 10">
    <location>
        <begin position="1"/>
        <end position="384"/>
    </location>
</feature>
<feature type="domain" description="MBD" evidence="3">
    <location>
        <begin position="4"/>
        <end position="74"/>
    </location>
</feature>
<feature type="region of interest" description="Disordered" evidence="4">
    <location>
        <begin position="65"/>
        <end position="384"/>
    </location>
</feature>
<feature type="coiled-coil region" evidence="2">
    <location>
        <begin position="100"/>
        <end position="224"/>
    </location>
</feature>
<feature type="coiled-coil region" evidence="2">
    <location>
        <begin position="310"/>
        <end position="356"/>
    </location>
</feature>
<feature type="compositionally biased region" description="Polar residues" evidence="4">
    <location>
        <begin position="80"/>
        <end position="91"/>
    </location>
</feature>
<feature type="compositionally biased region" description="Basic and acidic residues" evidence="4">
    <location>
        <begin position="106"/>
        <end position="227"/>
    </location>
</feature>
<feature type="compositionally biased region" description="Basic and acidic residues" evidence="4">
    <location>
        <begin position="234"/>
        <end position="250"/>
    </location>
</feature>
<feature type="compositionally biased region" description="Basic and acidic residues" evidence="4">
    <location>
        <begin position="257"/>
        <end position="269"/>
    </location>
</feature>
<feature type="compositionally biased region" description="Polar residues" evidence="4">
    <location>
        <begin position="270"/>
        <end position="284"/>
    </location>
</feature>
<feature type="compositionally biased region" description="Basic and acidic residues" evidence="4">
    <location>
        <begin position="295"/>
        <end position="365"/>
    </location>
</feature>
<feature type="compositionally biased region" description="Low complexity" evidence="4">
    <location>
        <begin position="369"/>
        <end position="384"/>
    </location>
</feature>
<feature type="modified residue" description="Phosphoserine" evidence="8">
    <location>
        <position position="323"/>
    </location>
</feature>
<feature type="splice variant" id="VSP_040661" description="In isoform 2." evidence="7">
    <location>
        <begin position="56"/>
        <end position="107"/>
    </location>
</feature>
<proteinExistence type="evidence at protein level"/>
<organism>
    <name type="scientific">Arabidopsis thaliana</name>
    <name type="common">Mouse-ear cress</name>
    <dbReference type="NCBI Taxonomy" id="3702"/>
    <lineage>
        <taxon>Eukaryota</taxon>
        <taxon>Viridiplantae</taxon>
        <taxon>Streptophyta</taxon>
        <taxon>Embryophyta</taxon>
        <taxon>Tracheophyta</taxon>
        <taxon>Spermatophyta</taxon>
        <taxon>Magnoliopsida</taxon>
        <taxon>eudicotyledons</taxon>
        <taxon>Gunneridae</taxon>
        <taxon>Pentapetalae</taxon>
        <taxon>rosids</taxon>
        <taxon>malvids</taxon>
        <taxon>Brassicales</taxon>
        <taxon>Brassicaceae</taxon>
        <taxon>Camelineae</taxon>
        <taxon>Arabidopsis</taxon>
    </lineage>
</organism>
<accession>Q9XI36</accession>
<accession>Q0WLE9</accession>
<comment type="function">
    <text evidence="1 6">Probable transcriptional regulator (By similarity). Required for nucleolar dominance that consist in the silencing of rRNA genes inherited from one progenitor in genetic hybrids.</text>
</comment>
<comment type="subcellular location">
    <subcellularLocation>
        <location evidence="6">Nucleus</location>
    </subcellularLocation>
</comment>
<comment type="alternative products">
    <event type="alternative splicing"/>
    <isoform>
        <id>Q9XI36-1</id>
        <name>1</name>
        <sequence type="displayed"/>
    </isoform>
    <isoform>
        <id>Q9XI36-2</id>
        <name>2</name>
        <sequence type="described" ref="VSP_040661"/>
    </isoform>
</comment>
<comment type="tissue specificity">
    <text evidence="5">Expressed in leaves, buds, flowers, stems and siliques.</text>
</comment>
<comment type="domain">
    <text evidence="1">The methyl-CpG-binding domain (MBD) functions both in binding to methylated DNA and in protein interactions.</text>
</comment>
<comment type="disruption phenotype">
    <text evidence="6">Impaired nucleolar dominance.</text>
</comment>
<sequence length="384" mass="42358">MENTDELVSIELPAPASWKKLFYPKRAGTPRKTEIVFVAPTGEEISSRKQLEQYLKAHPGNPVISEFEWTTGETPRRSSRISQKVKATTPTPDKEPLLKKRRSSLTKKDNKEAAEKNEEAAVKENMDVDKDGKTENAEAEKEKEKEGVTEIAEAEKENNEGEKTEAEKVNKEGEKTEAGKEGQTEIAEAEKEKEGEKAEAENKEAEVVRDKKESMEVDTSELEKKAGSGEGAEEPSKVEGLKDTEMKEAQEVVTEADVEKKPAEEKTENKGSVTTEANGEQNVTLGEPNLDADAEADKGKESKEYDEKTTEAEANKENDTQESDEKKTEAAANKENETQESDVKKTEAAVAEEKSNDMKAEDTNRSLEANQVQQQQGAAASVSC</sequence>
<protein>
    <recommendedName>
        <fullName>Methyl-CpG-binding domain-containing protein 10</fullName>
        <shortName>AtMBD10</shortName>
        <shortName>MBD10</shortName>
    </recommendedName>
    <alternativeName>
        <fullName>Methyl-CpG-binding protein MBD10</fullName>
    </alternativeName>
</protein>
<reference key="1">
    <citation type="journal article" date="2000" name="Nature">
        <title>Sequence and analysis of chromosome 1 of the plant Arabidopsis thaliana.</title>
        <authorList>
            <person name="Theologis A."/>
            <person name="Ecker J.R."/>
            <person name="Palm C.J."/>
            <person name="Federspiel N.A."/>
            <person name="Kaul S."/>
            <person name="White O."/>
            <person name="Alonso J."/>
            <person name="Altafi H."/>
            <person name="Araujo R."/>
            <person name="Bowman C.L."/>
            <person name="Brooks S.Y."/>
            <person name="Buehler E."/>
            <person name="Chan A."/>
            <person name="Chao Q."/>
            <person name="Chen H."/>
            <person name="Cheuk R.F."/>
            <person name="Chin C.W."/>
            <person name="Chung M.K."/>
            <person name="Conn L."/>
            <person name="Conway A.B."/>
            <person name="Conway A.R."/>
            <person name="Creasy T.H."/>
            <person name="Dewar K."/>
            <person name="Dunn P."/>
            <person name="Etgu P."/>
            <person name="Feldblyum T.V."/>
            <person name="Feng J.-D."/>
            <person name="Fong B."/>
            <person name="Fujii C.Y."/>
            <person name="Gill J.E."/>
            <person name="Goldsmith A.D."/>
            <person name="Haas B."/>
            <person name="Hansen N.F."/>
            <person name="Hughes B."/>
            <person name="Huizar L."/>
            <person name="Hunter J.L."/>
            <person name="Jenkins J."/>
            <person name="Johnson-Hopson C."/>
            <person name="Khan S."/>
            <person name="Khaykin E."/>
            <person name="Kim C.J."/>
            <person name="Koo H.L."/>
            <person name="Kremenetskaia I."/>
            <person name="Kurtz D.B."/>
            <person name="Kwan A."/>
            <person name="Lam B."/>
            <person name="Langin-Hooper S."/>
            <person name="Lee A."/>
            <person name="Lee J.M."/>
            <person name="Lenz C.A."/>
            <person name="Li J.H."/>
            <person name="Li Y.-P."/>
            <person name="Lin X."/>
            <person name="Liu S.X."/>
            <person name="Liu Z.A."/>
            <person name="Luros J.S."/>
            <person name="Maiti R."/>
            <person name="Marziali A."/>
            <person name="Militscher J."/>
            <person name="Miranda M."/>
            <person name="Nguyen M."/>
            <person name="Nierman W.C."/>
            <person name="Osborne B.I."/>
            <person name="Pai G."/>
            <person name="Peterson J."/>
            <person name="Pham P.K."/>
            <person name="Rizzo M."/>
            <person name="Rooney T."/>
            <person name="Rowley D."/>
            <person name="Sakano H."/>
            <person name="Salzberg S.L."/>
            <person name="Schwartz J.R."/>
            <person name="Shinn P."/>
            <person name="Southwick A.M."/>
            <person name="Sun H."/>
            <person name="Tallon L.J."/>
            <person name="Tambunga G."/>
            <person name="Toriumi M.J."/>
            <person name="Town C.D."/>
            <person name="Utterback T."/>
            <person name="Van Aken S."/>
            <person name="Vaysberg M."/>
            <person name="Vysotskaia V.S."/>
            <person name="Walker M."/>
            <person name="Wu D."/>
            <person name="Yu G."/>
            <person name="Fraser C.M."/>
            <person name="Venter J.C."/>
            <person name="Davis R.W."/>
        </authorList>
    </citation>
    <scope>NUCLEOTIDE SEQUENCE [LARGE SCALE GENOMIC DNA]</scope>
    <source>
        <strain>cv. Columbia</strain>
    </source>
</reference>
<reference key="2">
    <citation type="journal article" date="2017" name="Plant J.">
        <title>Araport11: a complete reannotation of the Arabidopsis thaliana reference genome.</title>
        <authorList>
            <person name="Cheng C.Y."/>
            <person name="Krishnakumar V."/>
            <person name="Chan A.P."/>
            <person name="Thibaud-Nissen F."/>
            <person name="Schobel S."/>
            <person name="Town C.D."/>
        </authorList>
    </citation>
    <scope>GENOME REANNOTATION</scope>
    <source>
        <strain>cv. Columbia</strain>
    </source>
</reference>
<reference key="3">
    <citation type="journal article" date="2003" name="Science">
        <title>Empirical analysis of transcriptional activity in the Arabidopsis genome.</title>
        <authorList>
            <person name="Yamada K."/>
            <person name="Lim J."/>
            <person name="Dale J.M."/>
            <person name="Chen H."/>
            <person name="Shinn P."/>
            <person name="Palm C.J."/>
            <person name="Southwick A.M."/>
            <person name="Wu H.C."/>
            <person name="Kim C.J."/>
            <person name="Nguyen M."/>
            <person name="Pham P.K."/>
            <person name="Cheuk R.F."/>
            <person name="Karlin-Newmann G."/>
            <person name="Liu S.X."/>
            <person name="Lam B."/>
            <person name="Sakano H."/>
            <person name="Wu T."/>
            <person name="Yu G."/>
            <person name="Miranda M."/>
            <person name="Quach H.L."/>
            <person name="Tripp M."/>
            <person name="Chang C.H."/>
            <person name="Lee J.M."/>
            <person name="Toriumi M.J."/>
            <person name="Chan M.M."/>
            <person name="Tang C.C."/>
            <person name="Onodera C.S."/>
            <person name="Deng J.M."/>
            <person name="Akiyama K."/>
            <person name="Ansari Y."/>
            <person name="Arakawa T."/>
            <person name="Banh J."/>
            <person name="Banno F."/>
            <person name="Bowser L."/>
            <person name="Brooks S.Y."/>
            <person name="Carninci P."/>
            <person name="Chao Q."/>
            <person name="Choy N."/>
            <person name="Enju A."/>
            <person name="Goldsmith A.D."/>
            <person name="Gurjal M."/>
            <person name="Hansen N.F."/>
            <person name="Hayashizaki Y."/>
            <person name="Johnson-Hopson C."/>
            <person name="Hsuan V.W."/>
            <person name="Iida K."/>
            <person name="Karnes M."/>
            <person name="Khan S."/>
            <person name="Koesema E."/>
            <person name="Ishida J."/>
            <person name="Jiang P.X."/>
            <person name="Jones T."/>
            <person name="Kawai J."/>
            <person name="Kamiya A."/>
            <person name="Meyers C."/>
            <person name="Nakajima M."/>
            <person name="Narusaka M."/>
            <person name="Seki M."/>
            <person name="Sakurai T."/>
            <person name="Satou M."/>
            <person name="Tamse R."/>
            <person name="Vaysberg M."/>
            <person name="Wallender E.K."/>
            <person name="Wong C."/>
            <person name="Yamamura Y."/>
            <person name="Yuan S."/>
            <person name="Shinozaki K."/>
            <person name="Davis R.W."/>
            <person name="Theologis A."/>
            <person name="Ecker J.R."/>
        </authorList>
    </citation>
    <scope>NUCLEOTIDE SEQUENCE [LARGE SCALE MRNA] (ISOFORM 1)</scope>
    <source>
        <strain>cv. Columbia</strain>
    </source>
</reference>
<reference key="4">
    <citation type="submission" date="2004-12" db="EMBL/GenBank/DDBJ databases">
        <title>Arabidopsis ORF clones.</title>
        <authorList>
            <person name="Kim C.J."/>
            <person name="Chen H."/>
            <person name="Cheuk R.F."/>
            <person name="Shinn P."/>
            <person name="Ecker J.R."/>
        </authorList>
    </citation>
    <scope>NUCLEOTIDE SEQUENCE [LARGE SCALE MRNA] (ISOFORM 1)</scope>
    <source>
        <strain>cv. Columbia</strain>
    </source>
</reference>
<reference key="5">
    <citation type="submission" date="2006-07" db="EMBL/GenBank/DDBJ databases">
        <title>Large-scale analysis of RIKEN Arabidopsis full-length (RAFL) cDNAs.</title>
        <authorList>
            <person name="Totoki Y."/>
            <person name="Seki M."/>
            <person name="Ishida J."/>
            <person name="Nakajima M."/>
            <person name="Enju A."/>
            <person name="Kamiya A."/>
            <person name="Narusaka M."/>
            <person name="Shin-i T."/>
            <person name="Nakagawa M."/>
            <person name="Sakamoto N."/>
            <person name="Oishi K."/>
            <person name="Kohara Y."/>
            <person name="Kobayashi M."/>
            <person name="Toyoda A."/>
            <person name="Sakaki Y."/>
            <person name="Sakurai T."/>
            <person name="Iida K."/>
            <person name="Akiyama K."/>
            <person name="Satou M."/>
            <person name="Toyoda T."/>
            <person name="Konagaya A."/>
            <person name="Carninci P."/>
            <person name="Kawai J."/>
            <person name="Hayashizaki Y."/>
            <person name="Shinozaki K."/>
        </authorList>
    </citation>
    <scope>NUCLEOTIDE SEQUENCE [LARGE SCALE MRNA] (ISOFORM 2)</scope>
    <source>
        <strain>cv. Columbia</strain>
    </source>
</reference>
<reference key="6">
    <citation type="journal article" date="2003" name="Nucleic Acids Res.">
        <title>Ten members of the Arabidopsis gene family encoding methyl-CpG-binding domain proteins are transcriptionally active and at least one, AtMBD11, is crucial for normal development.</title>
        <authorList>
            <person name="Berg A."/>
            <person name="Meza T.J."/>
            <person name="Mahic M."/>
            <person name="Thorstensen T."/>
            <person name="Kristiansen K."/>
            <person name="Aalen R.B."/>
        </authorList>
    </citation>
    <scope>TISSUE SPECIFICITY</scope>
    <scope>GENE FAMILY</scope>
    <scope>NOMENCLATURE</scope>
</reference>
<reference key="7">
    <citation type="journal article" date="2005" name="Plant Physiol.">
        <title>Evolutionary divergence of monocot and dicot methyl-CpG-binding domain proteins.</title>
        <authorList>
            <person name="Springer N.M."/>
            <person name="Kaeppler S.M."/>
        </authorList>
    </citation>
    <scope>GENE FAMILY</scope>
</reference>
<reference key="8">
    <citation type="journal article" date="2007" name="Trends Plant Sci.">
        <title>Methyl-CpG-binding domain proteins in plants: interpreters of DNA methylation.</title>
        <authorList>
            <person name="Zemach A."/>
            <person name="Grafi G."/>
        </authorList>
    </citation>
    <scope>REVIEW</scope>
</reference>
<reference key="9">
    <citation type="journal article" date="2008" name="Mol. Cell">
        <title>Multimegabase silencing in nucleolar dominance involves siRNA-directed DNA methylation and specific methylcytosine-binding proteins.</title>
        <authorList>
            <person name="Preuss S.B."/>
            <person name="Costa-Nunes P."/>
            <person name="Tucker S."/>
            <person name="Pontes O."/>
            <person name="Lawrence R.J."/>
            <person name="Mosher R."/>
            <person name="Kasschau K.D."/>
            <person name="Carrington J.C."/>
            <person name="Baulcombe D.C."/>
            <person name="Viegas W."/>
            <person name="Pikaard C.S."/>
        </authorList>
    </citation>
    <scope>FUNCTION</scope>
    <scope>DISRUPTION PHENOTYPE</scope>
    <scope>SUBCELLULAR LOCATION</scope>
</reference>
<reference key="10">
    <citation type="journal article" date="2009" name="J. Proteomics">
        <title>Phosphoproteomic analysis of nuclei-enriched fractions from Arabidopsis thaliana.</title>
        <authorList>
            <person name="Jones A.M.E."/>
            <person name="MacLean D."/>
            <person name="Studholme D.J."/>
            <person name="Serna-Sanz A."/>
            <person name="Andreasson E."/>
            <person name="Rathjen J.P."/>
            <person name="Peck S.C."/>
        </authorList>
    </citation>
    <scope>IDENTIFICATION BY MASS SPECTROMETRY [LARGE SCALE ANALYSIS]</scope>
    <source>
        <strain>cv. Columbia</strain>
    </source>
</reference>
<reference key="11">
    <citation type="journal article" date="2009" name="Plant Physiol.">
        <title>Large-scale Arabidopsis phosphoproteome profiling reveals novel chloroplast kinase substrates and phosphorylation networks.</title>
        <authorList>
            <person name="Reiland S."/>
            <person name="Messerli G."/>
            <person name="Baerenfaller K."/>
            <person name="Gerrits B."/>
            <person name="Endler A."/>
            <person name="Grossmann J."/>
            <person name="Gruissem W."/>
            <person name="Baginsky S."/>
        </authorList>
    </citation>
    <scope>PHOSPHORYLATION [LARGE SCALE ANALYSIS] AT SER-323</scope>
    <scope>IDENTIFICATION BY MASS SPECTROMETRY [LARGE SCALE ANALYSIS]</scope>
</reference>
<keyword id="KW-0025">Alternative splicing</keyword>
<keyword id="KW-0175">Coiled coil</keyword>
<keyword id="KW-0238">DNA-binding</keyword>
<keyword id="KW-0539">Nucleus</keyword>
<keyword id="KW-0597">Phosphoprotein</keyword>
<keyword id="KW-1185">Reference proteome</keyword>
<keyword id="KW-0804">Transcription</keyword>
<keyword id="KW-0805">Transcription regulation</keyword>
<dbReference type="EMBL" id="AC007591">
    <property type="protein sequence ID" value="AAD39661.1"/>
    <property type="molecule type" value="Genomic_DNA"/>
</dbReference>
<dbReference type="EMBL" id="CP002684">
    <property type="protein sequence ID" value="AEE29305.1"/>
    <property type="molecule type" value="Genomic_DNA"/>
</dbReference>
<dbReference type="EMBL" id="CP002684">
    <property type="protein sequence ID" value="AEE29306.1"/>
    <property type="molecule type" value="Genomic_DNA"/>
</dbReference>
<dbReference type="EMBL" id="AY094439">
    <property type="protein sequence ID" value="AAM19811.1"/>
    <property type="molecule type" value="mRNA"/>
</dbReference>
<dbReference type="EMBL" id="BT020367">
    <property type="protein sequence ID" value="AAV85722.1"/>
    <property type="molecule type" value="mRNA"/>
</dbReference>
<dbReference type="EMBL" id="AK230256">
    <property type="protein sequence ID" value="BAF02058.1"/>
    <property type="molecule type" value="mRNA"/>
</dbReference>
<dbReference type="PIR" id="G86287">
    <property type="entry name" value="G86287"/>
</dbReference>
<dbReference type="RefSeq" id="NP_001185003.1">
    <molecule id="Q9XI36-2"/>
    <property type="nucleotide sequence ID" value="NM_001198074.1"/>
</dbReference>
<dbReference type="RefSeq" id="NP_563971.1">
    <molecule id="Q9XI36-1"/>
    <property type="nucleotide sequence ID" value="NM_101403.4"/>
</dbReference>
<dbReference type="SMR" id="Q9XI36"/>
<dbReference type="BioGRID" id="23343">
    <property type="interactions" value="2"/>
</dbReference>
<dbReference type="FunCoup" id="Q9XI36">
    <property type="interactions" value="203"/>
</dbReference>
<dbReference type="IntAct" id="Q9XI36">
    <property type="interactions" value="2"/>
</dbReference>
<dbReference type="STRING" id="3702.Q9XI36"/>
<dbReference type="GlyGen" id="Q9XI36">
    <property type="glycosylation" value="1 site"/>
</dbReference>
<dbReference type="iPTMnet" id="Q9XI36"/>
<dbReference type="MetOSite" id="Q9XI36"/>
<dbReference type="PaxDb" id="3702-AT1G15340.1"/>
<dbReference type="ProMEX" id="Q9XI36"/>
<dbReference type="ProteomicsDB" id="238869">
    <molecule id="Q9XI36-1"/>
</dbReference>
<dbReference type="EnsemblPlants" id="AT1G15340.1">
    <molecule id="Q9XI36-1"/>
    <property type="protein sequence ID" value="AT1G15340.1"/>
    <property type="gene ID" value="AT1G15340"/>
</dbReference>
<dbReference type="EnsemblPlants" id="AT1G15340.2">
    <molecule id="Q9XI36-2"/>
    <property type="protein sequence ID" value="AT1G15340.2"/>
    <property type="gene ID" value="AT1G15340"/>
</dbReference>
<dbReference type="GeneID" id="838103"/>
<dbReference type="Gramene" id="AT1G15340.1">
    <molecule id="Q9XI36-1"/>
    <property type="protein sequence ID" value="AT1G15340.1"/>
    <property type="gene ID" value="AT1G15340"/>
</dbReference>
<dbReference type="Gramene" id="AT1G15340.2">
    <molecule id="Q9XI36-2"/>
    <property type="protein sequence ID" value="AT1G15340.2"/>
    <property type="gene ID" value="AT1G15340"/>
</dbReference>
<dbReference type="KEGG" id="ath:AT1G15340"/>
<dbReference type="Araport" id="AT1G15340"/>
<dbReference type="TAIR" id="AT1G15340">
    <property type="gene designation" value="MBD10"/>
</dbReference>
<dbReference type="eggNOG" id="ENOG502RYIM">
    <property type="taxonomic scope" value="Eukaryota"/>
</dbReference>
<dbReference type="HOGENOM" id="CLU_051759_0_0_1"/>
<dbReference type="InParanoid" id="Q9XI36"/>
<dbReference type="OMA" id="EFEWTTG"/>
<dbReference type="CD-CODE" id="4299E36E">
    <property type="entry name" value="Nucleolus"/>
</dbReference>
<dbReference type="PRO" id="PR:Q9XI36"/>
<dbReference type="Proteomes" id="UP000006548">
    <property type="component" value="Chromosome 1"/>
</dbReference>
<dbReference type="ExpressionAtlas" id="Q9XI36">
    <property type="expression patterns" value="baseline and differential"/>
</dbReference>
<dbReference type="GO" id="GO:0005829">
    <property type="term" value="C:cytosol"/>
    <property type="evidence" value="ECO:0007005"/>
    <property type="project" value="TAIR"/>
</dbReference>
<dbReference type="GO" id="GO:0005634">
    <property type="term" value="C:nucleus"/>
    <property type="evidence" value="ECO:0000314"/>
    <property type="project" value="UniProtKB"/>
</dbReference>
<dbReference type="GO" id="GO:0008327">
    <property type="term" value="F:methyl-CpG binding"/>
    <property type="evidence" value="ECO:0000250"/>
    <property type="project" value="TAIR"/>
</dbReference>
<dbReference type="Gene3D" id="3.30.890.10">
    <property type="entry name" value="Methyl-cpg-binding Protein 2, Chain A"/>
    <property type="match status" value="1"/>
</dbReference>
<dbReference type="InterPro" id="IPR016177">
    <property type="entry name" value="DNA-bd_dom_sf"/>
</dbReference>
<dbReference type="InterPro" id="IPR039622">
    <property type="entry name" value="MBD10/11"/>
</dbReference>
<dbReference type="InterPro" id="IPR001739">
    <property type="entry name" value="Methyl_CpG_DNA-bd"/>
</dbReference>
<dbReference type="PANTHER" id="PTHR33729">
    <property type="entry name" value="METHYL-CPG BINDING DOMAIN CONTAINING PROTEIN, EXPRESSED"/>
    <property type="match status" value="1"/>
</dbReference>
<dbReference type="PANTHER" id="PTHR33729:SF19">
    <property type="entry name" value="METHYL-CPG-BINDING DOMAIN-CONTAINING PROTEIN 10"/>
    <property type="match status" value="1"/>
</dbReference>
<dbReference type="Pfam" id="PF01429">
    <property type="entry name" value="MBD"/>
    <property type="match status" value="1"/>
</dbReference>
<dbReference type="SUPFAM" id="SSF54171">
    <property type="entry name" value="DNA-binding domain"/>
    <property type="match status" value="1"/>
</dbReference>
<dbReference type="PROSITE" id="PS50982">
    <property type="entry name" value="MBD"/>
    <property type="match status" value="1"/>
</dbReference>
<gene>
    <name type="primary">MBD10</name>
    <name type="ordered locus">At1g15340</name>
    <name type="ORF">F9L1.28</name>
</gene>